<accession>Q5FK09</accession>
<organism>
    <name type="scientific">Lactobacillus acidophilus (strain ATCC 700396 / NCK56 / N2 / NCFM)</name>
    <dbReference type="NCBI Taxonomy" id="272621"/>
    <lineage>
        <taxon>Bacteria</taxon>
        <taxon>Bacillati</taxon>
        <taxon>Bacillota</taxon>
        <taxon>Bacilli</taxon>
        <taxon>Lactobacillales</taxon>
        <taxon>Lactobacillaceae</taxon>
        <taxon>Lactobacillus</taxon>
    </lineage>
</organism>
<reference key="1">
    <citation type="journal article" date="2005" name="Proc. Natl. Acad. Sci. U.S.A.">
        <title>Complete genome sequence of the probiotic lactic acid bacterium Lactobacillus acidophilus NCFM.</title>
        <authorList>
            <person name="Altermann E."/>
            <person name="Russell W.M."/>
            <person name="Azcarate-Peril M.A."/>
            <person name="Barrangou R."/>
            <person name="Buck B.L."/>
            <person name="McAuliffe O."/>
            <person name="Souther N."/>
            <person name="Dobson A."/>
            <person name="Duong T."/>
            <person name="Callanan M."/>
            <person name="Lick S."/>
            <person name="Hamrick A."/>
            <person name="Cano R."/>
            <person name="Klaenhammer T.R."/>
        </authorList>
    </citation>
    <scope>NUCLEOTIDE SEQUENCE [LARGE SCALE GENOMIC DNA]</scope>
    <source>
        <strain>ATCC 700396 / NCK56 / N2 / NCFM</strain>
    </source>
</reference>
<dbReference type="EC" id="2.3.1.275" evidence="1"/>
<dbReference type="EMBL" id="CP000033">
    <property type="protein sequence ID" value="AAV42965.1"/>
    <property type="molecule type" value="Genomic_DNA"/>
</dbReference>
<dbReference type="RefSeq" id="YP_193996.1">
    <property type="nucleotide sequence ID" value="NC_006814.3"/>
</dbReference>
<dbReference type="SMR" id="Q5FK09"/>
<dbReference type="STRING" id="272621.LBA1121"/>
<dbReference type="KEGG" id="lac:LBA1121"/>
<dbReference type="PATRIC" id="fig|272621.13.peg.1067"/>
<dbReference type="eggNOG" id="COG0344">
    <property type="taxonomic scope" value="Bacteria"/>
</dbReference>
<dbReference type="HOGENOM" id="CLU_081254_4_0_9"/>
<dbReference type="OrthoDB" id="9777124at2"/>
<dbReference type="BioCyc" id="LACI272621:G1G49-1116-MONOMER"/>
<dbReference type="UniPathway" id="UPA00085"/>
<dbReference type="Proteomes" id="UP000006381">
    <property type="component" value="Chromosome"/>
</dbReference>
<dbReference type="GO" id="GO:0005886">
    <property type="term" value="C:plasma membrane"/>
    <property type="evidence" value="ECO:0007669"/>
    <property type="project" value="UniProtKB-SubCell"/>
</dbReference>
<dbReference type="GO" id="GO:0043772">
    <property type="term" value="F:acyl-phosphate glycerol-3-phosphate acyltransferase activity"/>
    <property type="evidence" value="ECO:0007669"/>
    <property type="project" value="UniProtKB-UniRule"/>
</dbReference>
<dbReference type="GO" id="GO:0008654">
    <property type="term" value="P:phospholipid biosynthetic process"/>
    <property type="evidence" value="ECO:0007669"/>
    <property type="project" value="UniProtKB-UniRule"/>
</dbReference>
<dbReference type="HAMAP" id="MF_01043">
    <property type="entry name" value="PlsY"/>
    <property type="match status" value="1"/>
</dbReference>
<dbReference type="InterPro" id="IPR003811">
    <property type="entry name" value="G3P_acylTferase_PlsY"/>
</dbReference>
<dbReference type="NCBIfam" id="TIGR00023">
    <property type="entry name" value="glycerol-3-phosphate 1-O-acyltransferase PlsY"/>
    <property type="match status" value="1"/>
</dbReference>
<dbReference type="PANTHER" id="PTHR30309:SF0">
    <property type="entry name" value="GLYCEROL-3-PHOSPHATE ACYLTRANSFERASE-RELATED"/>
    <property type="match status" value="1"/>
</dbReference>
<dbReference type="PANTHER" id="PTHR30309">
    <property type="entry name" value="INNER MEMBRANE PROTEIN YGIH"/>
    <property type="match status" value="1"/>
</dbReference>
<dbReference type="Pfam" id="PF02660">
    <property type="entry name" value="G3P_acyltransf"/>
    <property type="match status" value="1"/>
</dbReference>
<dbReference type="SMART" id="SM01207">
    <property type="entry name" value="G3P_acyltransf"/>
    <property type="match status" value="1"/>
</dbReference>
<evidence type="ECO:0000255" key="1">
    <source>
        <dbReference type="HAMAP-Rule" id="MF_01043"/>
    </source>
</evidence>
<sequence length="211" mass="23390">MFALKFASLFILAYLLGSFPAGVVVGKIFFYKDIRKYGSGNIGTTNTFRVLGPVAGIIVFLIDFFKGTLATLIPVIFNLGPHYLCLIFGLVAILGHAFPIFLKFKGGKAVATSAGFLLGYNVHFFLICAVIFIPILFITSMVSLTSLISVVLIFIASFFFHDIALSIISGLLVILIYWSHRSNIARIEKHQENMVPFGVVYWLKNKHTKSK</sequence>
<protein>
    <recommendedName>
        <fullName evidence="1">Glycerol-3-phosphate acyltransferase 2</fullName>
    </recommendedName>
    <alternativeName>
        <fullName evidence="1">Acyl-PO4 G3P acyltransferase 2</fullName>
    </alternativeName>
    <alternativeName>
        <fullName evidence="1">Acyl-phosphate--glycerol-3-phosphate acyltransferase 2</fullName>
    </alternativeName>
    <alternativeName>
        <fullName evidence="1">G3P acyltransferase 2</fullName>
        <shortName evidence="1">GPAT 2</shortName>
        <ecNumber evidence="1">2.3.1.275</ecNumber>
    </alternativeName>
    <alternativeName>
        <fullName evidence="1">Lysophosphatidic acid synthase 2</fullName>
        <shortName evidence="1">LPA synthase 2</shortName>
    </alternativeName>
</protein>
<proteinExistence type="inferred from homology"/>
<comment type="function">
    <text evidence="1">Catalyzes the transfer of an acyl group from acyl-phosphate (acyl-PO(4)) to glycerol-3-phosphate (G3P) to form lysophosphatidic acid (LPA). This enzyme utilizes acyl-phosphate as fatty acyl donor, but not acyl-CoA or acyl-ACP.</text>
</comment>
<comment type="catalytic activity">
    <reaction evidence="1">
        <text>an acyl phosphate + sn-glycerol 3-phosphate = a 1-acyl-sn-glycero-3-phosphate + phosphate</text>
        <dbReference type="Rhea" id="RHEA:34075"/>
        <dbReference type="ChEBI" id="CHEBI:43474"/>
        <dbReference type="ChEBI" id="CHEBI:57597"/>
        <dbReference type="ChEBI" id="CHEBI:57970"/>
        <dbReference type="ChEBI" id="CHEBI:59918"/>
        <dbReference type="EC" id="2.3.1.275"/>
    </reaction>
</comment>
<comment type="pathway">
    <text evidence="1">Lipid metabolism; phospholipid metabolism.</text>
</comment>
<comment type="subunit">
    <text evidence="1">Probably interacts with PlsX.</text>
</comment>
<comment type="subcellular location">
    <subcellularLocation>
        <location evidence="1">Cell membrane</location>
        <topology evidence="1">Multi-pass membrane protein</topology>
    </subcellularLocation>
</comment>
<comment type="similarity">
    <text evidence="1">Belongs to the PlsY family.</text>
</comment>
<name>PLSY2_LACAC</name>
<keyword id="KW-1003">Cell membrane</keyword>
<keyword id="KW-0444">Lipid biosynthesis</keyword>
<keyword id="KW-0443">Lipid metabolism</keyword>
<keyword id="KW-0472">Membrane</keyword>
<keyword id="KW-0594">Phospholipid biosynthesis</keyword>
<keyword id="KW-1208">Phospholipid metabolism</keyword>
<keyword id="KW-1185">Reference proteome</keyword>
<keyword id="KW-0808">Transferase</keyword>
<keyword id="KW-0812">Transmembrane</keyword>
<keyword id="KW-1133">Transmembrane helix</keyword>
<feature type="chain" id="PRO_0000188384" description="Glycerol-3-phosphate acyltransferase 2">
    <location>
        <begin position="1"/>
        <end position="211"/>
    </location>
</feature>
<feature type="transmembrane region" description="Helical" evidence="1">
    <location>
        <begin position="6"/>
        <end position="26"/>
    </location>
</feature>
<feature type="transmembrane region" description="Helical" evidence="1">
    <location>
        <begin position="57"/>
        <end position="77"/>
    </location>
</feature>
<feature type="transmembrane region" description="Helical" evidence="1">
    <location>
        <begin position="82"/>
        <end position="102"/>
    </location>
</feature>
<feature type="transmembrane region" description="Helical" evidence="1">
    <location>
        <begin position="124"/>
        <end position="144"/>
    </location>
</feature>
<feature type="transmembrane region" description="Helical" evidence="1">
    <location>
        <begin position="148"/>
        <end position="168"/>
    </location>
</feature>
<gene>
    <name evidence="1" type="primary">plsY2</name>
    <name type="ordered locus">LBA1121</name>
</gene>